<evidence type="ECO:0000250" key="1"/>
<evidence type="ECO:0000305" key="2"/>
<organism>
    <name type="scientific">Shewanella sp. (strain DB6705)</name>
    <dbReference type="NCBI Taxonomy" id="126830"/>
    <lineage>
        <taxon>Bacteria</taxon>
        <taxon>Pseudomonadati</taxon>
        <taxon>Pseudomonadota</taxon>
        <taxon>Gammaproteobacteria</taxon>
        <taxon>Alteromonadales</taxon>
        <taxon>Shewanellaceae</taxon>
        <taxon>Shewanella</taxon>
    </lineage>
</organism>
<feature type="chain" id="PRO_0000075988" description="Erythronate-4-phosphate dehydrogenase">
    <location>
        <begin position="1" status="less than"/>
        <end position="274"/>
    </location>
</feature>
<feature type="active site" evidence="1">
    <location>
        <position position="95"/>
    </location>
</feature>
<feature type="active site" evidence="1">
    <location>
        <position position="124"/>
    </location>
</feature>
<feature type="active site" description="Proton donor" evidence="1">
    <location>
        <position position="141"/>
    </location>
</feature>
<feature type="binding site" evidence="1">
    <location>
        <position position="34"/>
    </location>
    <ligand>
        <name>NAD(+)</name>
        <dbReference type="ChEBI" id="CHEBI:57540"/>
    </ligand>
</feature>
<feature type="binding site" evidence="1">
    <location>
        <position position="119"/>
    </location>
    <ligand>
        <name>NAD(+)</name>
        <dbReference type="ChEBI" id="CHEBI:57540"/>
    </ligand>
</feature>
<feature type="binding site" evidence="1">
    <location>
        <position position="144"/>
    </location>
    <ligand>
        <name>NAD(+)</name>
        <dbReference type="ChEBI" id="CHEBI:57540"/>
    </ligand>
</feature>
<feature type="binding site" evidence="1">
    <location>
        <position position="145"/>
    </location>
    <ligand>
        <name>substrate</name>
    </ligand>
</feature>
<feature type="non-terminal residue">
    <location>
        <position position="1"/>
    </location>
</feature>
<dbReference type="EC" id="1.1.1.290"/>
<dbReference type="EMBL" id="D49539">
    <property type="protein sequence ID" value="BAA08487.1"/>
    <property type="molecule type" value="Genomic_DNA"/>
</dbReference>
<dbReference type="SMR" id="Q56731"/>
<dbReference type="UniPathway" id="UPA00244">
    <property type="reaction ID" value="UER00310"/>
</dbReference>
<dbReference type="GO" id="GO:0005829">
    <property type="term" value="C:cytosol"/>
    <property type="evidence" value="ECO:0007669"/>
    <property type="project" value="TreeGrafter"/>
</dbReference>
<dbReference type="GO" id="GO:0033711">
    <property type="term" value="F:4-phosphoerythronate dehydrogenase activity"/>
    <property type="evidence" value="ECO:0007669"/>
    <property type="project" value="UniProtKB-EC"/>
</dbReference>
<dbReference type="GO" id="GO:0030267">
    <property type="term" value="F:glyoxylate reductase (NADPH) activity"/>
    <property type="evidence" value="ECO:0007669"/>
    <property type="project" value="TreeGrafter"/>
</dbReference>
<dbReference type="GO" id="GO:0016618">
    <property type="term" value="F:hydroxypyruvate reductase [NAD(P)H] activity"/>
    <property type="evidence" value="ECO:0007669"/>
    <property type="project" value="TreeGrafter"/>
</dbReference>
<dbReference type="GO" id="GO:0051287">
    <property type="term" value="F:NAD binding"/>
    <property type="evidence" value="ECO:0007669"/>
    <property type="project" value="InterPro"/>
</dbReference>
<dbReference type="GO" id="GO:0046983">
    <property type="term" value="F:protein dimerization activity"/>
    <property type="evidence" value="ECO:0007669"/>
    <property type="project" value="InterPro"/>
</dbReference>
<dbReference type="GO" id="GO:0008615">
    <property type="term" value="P:pyridoxine biosynthetic process"/>
    <property type="evidence" value="ECO:0007669"/>
    <property type="project" value="UniProtKB-KW"/>
</dbReference>
<dbReference type="CDD" id="cd12158">
    <property type="entry name" value="ErythrP_dh"/>
    <property type="match status" value="1"/>
</dbReference>
<dbReference type="Gene3D" id="3.30.1370.170">
    <property type="match status" value="1"/>
</dbReference>
<dbReference type="Gene3D" id="3.40.50.720">
    <property type="entry name" value="NAD(P)-binding Rossmann-like Domain"/>
    <property type="match status" value="1"/>
</dbReference>
<dbReference type="InterPro" id="IPR050223">
    <property type="entry name" value="D-isomer_2-hydroxyacid_DH"/>
</dbReference>
<dbReference type="InterPro" id="IPR029753">
    <property type="entry name" value="D-isomer_DH_CS"/>
</dbReference>
<dbReference type="InterPro" id="IPR006140">
    <property type="entry name" value="D-isomer_DH_NAD-bd"/>
</dbReference>
<dbReference type="InterPro" id="IPR020921">
    <property type="entry name" value="Erythronate-4-P_DHase"/>
</dbReference>
<dbReference type="InterPro" id="IPR024531">
    <property type="entry name" value="Erythronate-4-P_DHase_dimer"/>
</dbReference>
<dbReference type="InterPro" id="IPR036291">
    <property type="entry name" value="NAD(P)-bd_dom_sf"/>
</dbReference>
<dbReference type="InterPro" id="IPR038251">
    <property type="entry name" value="PdxB_dimer_sf"/>
</dbReference>
<dbReference type="PANTHER" id="PTHR10996:SF178">
    <property type="entry name" value="2-HYDROXYACID DEHYDROGENASE YGL185C-RELATED"/>
    <property type="match status" value="1"/>
</dbReference>
<dbReference type="PANTHER" id="PTHR10996">
    <property type="entry name" value="2-HYDROXYACID DEHYDROGENASE-RELATED"/>
    <property type="match status" value="1"/>
</dbReference>
<dbReference type="Pfam" id="PF02826">
    <property type="entry name" value="2-Hacid_dh_C"/>
    <property type="match status" value="1"/>
</dbReference>
<dbReference type="Pfam" id="PF11890">
    <property type="entry name" value="DUF3410"/>
    <property type="match status" value="1"/>
</dbReference>
<dbReference type="SUPFAM" id="SSF51735">
    <property type="entry name" value="NAD(P)-binding Rossmann-fold domains"/>
    <property type="match status" value="1"/>
</dbReference>
<dbReference type="PROSITE" id="PS00671">
    <property type="entry name" value="D_2_HYDROXYACID_DH_3"/>
    <property type="match status" value="1"/>
</dbReference>
<comment type="function">
    <text evidence="1">Catalyzes the oxidation of erythronate-4-phosphate to 3-hydroxy-2-oxo-4-phosphonooxybutanoate.</text>
</comment>
<comment type="catalytic activity">
    <reaction>
        <text>4-phospho-D-erythronate + NAD(+) = (R)-3-hydroxy-2-oxo-4-phosphooxybutanoate + NADH + H(+)</text>
        <dbReference type="Rhea" id="RHEA:18829"/>
        <dbReference type="ChEBI" id="CHEBI:15378"/>
        <dbReference type="ChEBI" id="CHEBI:57540"/>
        <dbReference type="ChEBI" id="CHEBI:57945"/>
        <dbReference type="ChEBI" id="CHEBI:58538"/>
        <dbReference type="ChEBI" id="CHEBI:58766"/>
        <dbReference type="EC" id="1.1.1.290"/>
    </reaction>
</comment>
<comment type="pathway">
    <text>Cofactor biosynthesis; pyridoxine 5'-phosphate biosynthesis; pyridoxine 5'-phosphate from D-erythrose 4-phosphate: step 2/5.</text>
</comment>
<comment type="subunit">
    <text evidence="1">Homodimer.</text>
</comment>
<comment type="subcellular location">
    <subcellularLocation>
        <location evidence="2">Cytoplasm</location>
    </subcellularLocation>
</comment>
<comment type="similarity">
    <text evidence="2">Belongs to the D-isomer specific 2-hydroxyacid dehydrogenase family. PdxB subfamily.</text>
</comment>
<name>PDXB_SHESP</name>
<reference key="1">
    <citation type="journal article" date="1997" name="J. Biochem.">
        <title>Comparison of the gene expression of aspartate beta-D-semialdehyde dehydrogenase at elevated hydrostatic pressure in deep-sea bacteria.</title>
        <authorList>
            <person name="Kato C."/>
            <person name="Smorawinska M."/>
            <person name="Li L."/>
            <person name="Horikoshi K."/>
        </authorList>
    </citation>
    <scope>NUCLEOTIDE SEQUENCE [GENOMIC DNA]</scope>
</reference>
<sequence length="274" mass="30717">KLKDKTVGIVGAGNTGSAVAKCLQAYGVTVLLHDPVIQDSDPRDFISLDELIACCDVISLHVPITKTGEHKTWYLFDEARLNSLKQGTWLLNCCRGEVIDNQALIKVKLERPDIKLVLDVWEGEPNPMHELIPLVELATPHIAGYSLEGKARGTFMLYQKLMQVLGKDADKSMTALLPSLWSVQLDVESIPDQKSLLQLARFIYDLRDDDELFRKTILDDSSKNPQVNSLNNNGFDLMRKNHLHRREFSALRLVNTGHSDVNWLTNLGFSGIGQ</sequence>
<proteinExistence type="inferred from homology"/>
<accession>Q56731</accession>
<protein>
    <recommendedName>
        <fullName>Erythronate-4-phosphate dehydrogenase</fullName>
        <ecNumber>1.1.1.290</ecNumber>
    </recommendedName>
</protein>
<keyword id="KW-0963">Cytoplasm</keyword>
<keyword id="KW-0520">NAD</keyword>
<keyword id="KW-0560">Oxidoreductase</keyword>
<keyword id="KW-0664">Pyridoxine biosynthesis</keyword>
<gene>
    <name type="primary">pdxB</name>
</gene>